<organism>
    <name type="scientific">Bacillus subtilis (strain 168)</name>
    <dbReference type="NCBI Taxonomy" id="224308"/>
    <lineage>
        <taxon>Bacteria</taxon>
        <taxon>Bacillati</taxon>
        <taxon>Bacillota</taxon>
        <taxon>Bacilli</taxon>
        <taxon>Bacillales</taxon>
        <taxon>Bacillaceae</taxon>
        <taxon>Bacillus</taxon>
    </lineage>
</organism>
<dbReference type="EMBL" id="AL009126">
    <property type="protein sequence ID" value="CAB13918.1"/>
    <property type="molecule type" value="Genomic_DNA"/>
</dbReference>
<dbReference type="RefSeq" id="NP_389908.1">
    <property type="nucleotide sequence ID" value="NC_000964.3"/>
</dbReference>
<dbReference type="RefSeq" id="WP_004399507.1">
    <property type="nucleotide sequence ID" value="NZ_OZ025638.1"/>
</dbReference>
<dbReference type="SMR" id="O31894"/>
<dbReference type="FunCoup" id="O31894">
    <property type="interactions" value="61"/>
</dbReference>
<dbReference type="STRING" id="224308.BSU20260"/>
<dbReference type="PaxDb" id="224308-BSU20260"/>
<dbReference type="EnsemblBacteria" id="CAB13918">
    <property type="protein sequence ID" value="CAB13918"/>
    <property type="gene ID" value="BSU_20260"/>
</dbReference>
<dbReference type="GeneID" id="939525"/>
<dbReference type="KEGG" id="bsu:BSU20260"/>
<dbReference type="PATRIC" id="fig|224308.179.peg.2216"/>
<dbReference type="InParanoid" id="O31894"/>
<dbReference type="OrthoDB" id="9870185at2"/>
<dbReference type="BioCyc" id="BSUB:BSU20260-MONOMER"/>
<dbReference type="Proteomes" id="UP000001570">
    <property type="component" value="Chromosome"/>
</dbReference>
<accession>O31894</accession>
<proteinExistence type="predicted"/>
<reference key="1">
    <citation type="journal article" date="1997" name="Nature">
        <title>The complete genome sequence of the Gram-positive bacterium Bacillus subtilis.</title>
        <authorList>
            <person name="Kunst F."/>
            <person name="Ogasawara N."/>
            <person name="Moszer I."/>
            <person name="Albertini A.M."/>
            <person name="Alloni G."/>
            <person name="Azevedo V."/>
            <person name="Bertero M.G."/>
            <person name="Bessieres P."/>
            <person name="Bolotin A."/>
            <person name="Borchert S."/>
            <person name="Borriss R."/>
            <person name="Boursier L."/>
            <person name="Brans A."/>
            <person name="Braun M."/>
            <person name="Brignell S.C."/>
            <person name="Bron S."/>
            <person name="Brouillet S."/>
            <person name="Bruschi C.V."/>
            <person name="Caldwell B."/>
            <person name="Capuano V."/>
            <person name="Carter N.M."/>
            <person name="Choi S.-K."/>
            <person name="Codani J.-J."/>
            <person name="Connerton I.F."/>
            <person name="Cummings N.J."/>
            <person name="Daniel R.A."/>
            <person name="Denizot F."/>
            <person name="Devine K.M."/>
            <person name="Duesterhoeft A."/>
            <person name="Ehrlich S.D."/>
            <person name="Emmerson P.T."/>
            <person name="Entian K.-D."/>
            <person name="Errington J."/>
            <person name="Fabret C."/>
            <person name="Ferrari E."/>
            <person name="Foulger D."/>
            <person name="Fritz C."/>
            <person name="Fujita M."/>
            <person name="Fujita Y."/>
            <person name="Fuma S."/>
            <person name="Galizzi A."/>
            <person name="Galleron N."/>
            <person name="Ghim S.-Y."/>
            <person name="Glaser P."/>
            <person name="Goffeau A."/>
            <person name="Golightly E.J."/>
            <person name="Grandi G."/>
            <person name="Guiseppi G."/>
            <person name="Guy B.J."/>
            <person name="Haga K."/>
            <person name="Haiech J."/>
            <person name="Harwood C.R."/>
            <person name="Henaut A."/>
            <person name="Hilbert H."/>
            <person name="Holsappel S."/>
            <person name="Hosono S."/>
            <person name="Hullo M.-F."/>
            <person name="Itaya M."/>
            <person name="Jones L.-M."/>
            <person name="Joris B."/>
            <person name="Karamata D."/>
            <person name="Kasahara Y."/>
            <person name="Klaerr-Blanchard M."/>
            <person name="Klein C."/>
            <person name="Kobayashi Y."/>
            <person name="Koetter P."/>
            <person name="Koningstein G."/>
            <person name="Krogh S."/>
            <person name="Kumano M."/>
            <person name="Kurita K."/>
            <person name="Lapidus A."/>
            <person name="Lardinois S."/>
            <person name="Lauber J."/>
            <person name="Lazarevic V."/>
            <person name="Lee S.-M."/>
            <person name="Levine A."/>
            <person name="Liu H."/>
            <person name="Masuda S."/>
            <person name="Mauel C."/>
            <person name="Medigue C."/>
            <person name="Medina N."/>
            <person name="Mellado R.P."/>
            <person name="Mizuno M."/>
            <person name="Moestl D."/>
            <person name="Nakai S."/>
            <person name="Noback M."/>
            <person name="Noone D."/>
            <person name="O'Reilly M."/>
            <person name="Ogawa K."/>
            <person name="Ogiwara A."/>
            <person name="Oudega B."/>
            <person name="Park S.-H."/>
            <person name="Parro V."/>
            <person name="Pohl T.M."/>
            <person name="Portetelle D."/>
            <person name="Porwollik S."/>
            <person name="Prescott A.M."/>
            <person name="Presecan E."/>
            <person name="Pujic P."/>
            <person name="Purnelle B."/>
            <person name="Rapoport G."/>
            <person name="Rey M."/>
            <person name="Reynolds S."/>
            <person name="Rieger M."/>
            <person name="Rivolta C."/>
            <person name="Rocha E."/>
            <person name="Roche B."/>
            <person name="Rose M."/>
            <person name="Sadaie Y."/>
            <person name="Sato T."/>
            <person name="Scanlan E."/>
            <person name="Schleich S."/>
            <person name="Schroeter R."/>
            <person name="Scoffone F."/>
            <person name="Sekiguchi J."/>
            <person name="Sekowska A."/>
            <person name="Seror S.J."/>
            <person name="Serror P."/>
            <person name="Shin B.-S."/>
            <person name="Soldo B."/>
            <person name="Sorokin A."/>
            <person name="Tacconi E."/>
            <person name="Takagi T."/>
            <person name="Takahashi H."/>
            <person name="Takemaru K."/>
            <person name="Takeuchi M."/>
            <person name="Tamakoshi A."/>
            <person name="Tanaka T."/>
            <person name="Terpstra P."/>
            <person name="Tognoni A."/>
            <person name="Tosato V."/>
            <person name="Uchiyama S."/>
            <person name="Vandenbol M."/>
            <person name="Vannier F."/>
            <person name="Vassarotti A."/>
            <person name="Viari A."/>
            <person name="Wambutt R."/>
            <person name="Wedler E."/>
            <person name="Wedler H."/>
            <person name="Weitzenegger T."/>
            <person name="Winters P."/>
            <person name="Wipat A."/>
            <person name="Yamamoto H."/>
            <person name="Yamane K."/>
            <person name="Yasumoto K."/>
            <person name="Yata K."/>
            <person name="Yoshida K."/>
            <person name="Yoshikawa H.-F."/>
            <person name="Zumstein E."/>
            <person name="Yoshikawa H."/>
            <person name="Danchin A."/>
        </authorList>
    </citation>
    <scope>NUCLEOTIDE SEQUENCE [LARGE SCALE GENOMIC DNA]</scope>
    <source>
        <strain>168</strain>
    </source>
</reference>
<sequence length="39" mass="4696">MERFIKRLSASCESTIHHKVYQIMNEAKTEFEKVLKKLK</sequence>
<name>YORT_BACSU</name>
<gene>
    <name type="primary">yorT</name>
    <name type="ordered locus">BSU20260</name>
</gene>
<keyword id="KW-1185">Reference proteome</keyword>
<protein>
    <recommendedName>
        <fullName>SPbeta prophage-derived uncharacterized protein YorT</fullName>
    </recommendedName>
</protein>
<feature type="chain" id="PRO_0000370262" description="SPbeta prophage-derived uncharacterized protein YorT">
    <location>
        <begin position="1"/>
        <end position="39"/>
    </location>
</feature>